<reference key="1">
    <citation type="journal article" date="2004" name="Proc. Natl. Acad. Sci. U.S.A.">
        <title>Genomic analysis of Bacteroides fragilis reveals extensive DNA inversions regulating cell surface adaptation.</title>
        <authorList>
            <person name="Kuwahara T."/>
            <person name="Yamashita A."/>
            <person name="Hirakawa H."/>
            <person name="Nakayama H."/>
            <person name="Toh H."/>
            <person name="Okada N."/>
            <person name="Kuhara S."/>
            <person name="Hattori M."/>
            <person name="Hayashi T."/>
            <person name="Ohnishi Y."/>
        </authorList>
    </citation>
    <scope>NUCLEOTIDE SEQUENCE [LARGE SCALE GENOMIC DNA]</scope>
    <source>
        <strain>YCH46</strain>
    </source>
</reference>
<evidence type="ECO:0000255" key="1">
    <source>
        <dbReference type="HAMAP-Rule" id="MF_00049"/>
    </source>
</evidence>
<dbReference type="EC" id="6.1.1.4" evidence="1"/>
<dbReference type="EMBL" id="AP006841">
    <property type="protein sequence ID" value="BAD51323.1"/>
    <property type="molecule type" value="Genomic_DNA"/>
</dbReference>
<dbReference type="RefSeq" id="WP_011203753.1">
    <property type="nucleotide sequence ID" value="NC_006347.1"/>
</dbReference>
<dbReference type="RefSeq" id="YP_101857.1">
    <property type="nucleotide sequence ID" value="NC_006347.1"/>
</dbReference>
<dbReference type="SMR" id="Q64MG4"/>
<dbReference type="STRING" id="295405.BF4586"/>
<dbReference type="KEGG" id="bfr:BF4586"/>
<dbReference type="PATRIC" id="fig|295405.11.peg.4410"/>
<dbReference type="HOGENOM" id="CLU_004427_0_0_10"/>
<dbReference type="OrthoDB" id="9810365at2"/>
<dbReference type="Proteomes" id="UP000002197">
    <property type="component" value="Chromosome"/>
</dbReference>
<dbReference type="GO" id="GO:0005829">
    <property type="term" value="C:cytosol"/>
    <property type="evidence" value="ECO:0007669"/>
    <property type="project" value="TreeGrafter"/>
</dbReference>
<dbReference type="GO" id="GO:0002161">
    <property type="term" value="F:aminoacyl-tRNA deacylase activity"/>
    <property type="evidence" value="ECO:0007669"/>
    <property type="project" value="InterPro"/>
</dbReference>
<dbReference type="GO" id="GO:0005524">
    <property type="term" value="F:ATP binding"/>
    <property type="evidence" value="ECO:0007669"/>
    <property type="project" value="UniProtKB-UniRule"/>
</dbReference>
<dbReference type="GO" id="GO:0004823">
    <property type="term" value="F:leucine-tRNA ligase activity"/>
    <property type="evidence" value="ECO:0007669"/>
    <property type="project" value="UniProtKB-UniRule"/>
</dbReference>
<dbReference type="GO" id="GO:0006429">
    <property type="term" value="P:leucyl-tRNA aminoacylation"/>
    <property type="evidence" value="ECO:0007669"/>
    <property type="project" value="UniProtKB-UniRule"/>
</dbReference>
<dbReference type="CDD" id="cd07958">
    <property type="entry name" value="Anticodon_Ia_Leu_BEm"/>
    <property type="match status" value="1"/>
</dbReference>
<dbReference type="FunFam" id="3.40.50.620:FF:000056">
    <property type="entry name" value="Leucine--tRNA ligase"/>
    <property type="match status" value="1"/>
</dbReference>
<dbReference type="FunFam" id="3.40.50.620:FF:000060">
    <property type="entry name" value="Leucine--tRNA ligase"/>
    <property type="match status" value="1"/>
</dbReference>
<dbReference type="FunFam" id="3.40.50.620:FF:000154">
    <property type="entry name" value="Leucine--tRNA ligase"/>
    <property type="match status" value="1"/>
</dbReference>
<dbReference type="FunFam" id="1.10.730.10:FF:000011">
    <property type="entry name" value="Leucine--tRNA ligase chloroplastic/mitochondrial"/>
    <property type="match status" value="1"/>
</dbReference>
<dbReference type="Gene3D" id="3.40.50.620">
    <property type="entry name" value="HUPs"/>
    <property type="match status" value="3"/>
</dbReference>
<dbReference type="Gene3D" id="1.10.730.10">
    <property type="entry name" value="Isoleucyl-tRNA Synthetase, Domain 1"/>
    <property type="match status" value="1"/>
</dbReference>
<dbReference type="HAMAP" id="MF_00049_B">
    <property type="entry name" value="Leu_tRNA_synth_B"/>
    <property type="match status" value="1"/>
</dbReference>
<dbReference type="InterPro" id="IPR001412">
    <property type="entry name" value="aa-tRNA-synth_I_CS"/>
</dbReference>
<dbReference type="InterPro" id="IPR002302">
    <property type="entry name" value="Leu-tRNA-ligase"/>
</dbReference>
<dbReference type="InterPro" id="IPR025709">
    <property type="entry name" value="Leu_tRNA-synth_edit"/>
</dbReference>
<dbReference type="InterPro" id="IPR013155">
    <property type="entry name" value="M/V/L/I-tRNA-synth_anticd-bd"/>
</dbReference>
<dbReference type="InterPro" id="IPR015413">
    <property type="entry name" value="Methionyl/Leucyl_tRNA_Synth"/>
</dbReference>
<dbReference type="InterPro" id="IPR014729">
    <property type="entry name" value="Rossmann-like_a/b/a_fold"/>
</dbReference>
<dbReference type="InterPro" id="IPR009080">
    <property type="entry name" value="tRNAsynth_Ia_anticodon-bd"/>
</dbReference>
<dbReference type="InterPro" id="IPR009008">
    <property type="entry name" value="Val/Leu/Ile-tRNA-synth_edit"/>
</dbReference>
<dbReference type="NCBIfam" id="TIGR00396">
    <property type="entry name" value="leuS_bact"/>
    <property type="match status" value="1"/>
</dbReference>
<dbReference type="PANTHER" id="PTHR43740:SF2">
    <property type="entry name" value="LEUCINE--TRNA LIGASE, MITOCHONDRIAL"/>
    <property type="match status" value="1"/>
</dbReference>
<dbReference type="PANTHER" id="PTHR43740">
    <property type="entry name" value="LEUCYL-TRNA SYNTHETASE"/>
    <property type="match status" value="1"/>
</dbReference>
<dbReference type="Pfam" id="PF08264">
    <property type="entry name" value="Anticodon_1"/>
    <property type="match status" value="1"/>
</dbReference>
<dbReference type="Pfam" id="PF13603">
    <property type="entry name" value="tRNA-synt_1_2"/>
    <property type="match status" value="1"/>
</dbReference>
<dbReference type="Pfam" id="PF09334">
    <property type="entry name" value="tRNA-synt_1g"/>
    <property type="match status" value="1"/>
</dbReference>
<dbReference type="PRINTS" id="PR00985">
    <property type="entry name" value="TRNASYNTHLEU"/>
</dbReference>
<dbReference type="SUPFAM" id="SSF47323">
    <property type="entry name" value="Anticodon-binding domain of a subclass of class I aminoacyl-tRNA synthetases"/>
    <property type="match status" value="1"/>
</dbReference>
<dbReference type="SUPFAM" id="SSF52374">
    <property type="entry name" value="Nucleotidylyl transferase"/>
    <property type="match status" value="1"/>
</dbReference>
<dbReference type="SUPFAM" id="SSF50677">
    <property type="entry name" value="ValRS/IleRS/LeuRS editing domain"/>
    <property type="match status" value="1"/>
</dbReference>
<dbReference type="PROSITE" id="PS00178">
    <property type="entry name" value="AA_TRNA_LIGASE_I"/>
    <property type="match status" value="1"/>
</dbReference>
<protein>
    <recommendedName>
        <fullName evidence="1">Leucine--tRNA ligase</fullName>
        <ecNumber evidence="1">6.1.1.4</ecNumber>
    </recommendedName>
    <alternativeName>
        <fullName evidence="1">Leucyl-tRNA synthetase</fullName>
        <shortName evidence="1">LeuRS</shortName>
    </alternativeName>
</protein>
<gene>
    <name evidence="1" type="primary">leuS</name>
    <name type="ordered locus">BF4586</name>
</gene>
<comment type="catalytic activity">
    <reaction evidence="1">
        <text>tRNA(Leu) + L-leucine + ATP = L-leucyl-tRNA(Leu) + AMP + diphosphate</text>
        <dbReference type="Rhea" id="RHEA:11688"/>
        <dbReference type="Rhea" id="RHEA-COMP:9613"/>
        <dbReference type="Rhea" id="RHEA-COMP:9622"/>
        <dbReference type="ChEBI" id="CHEBI:30616"/>
        <dbReference type="ChEBI" id="CHEBI:33019"/>
        <dbReference type="ChEBI" id="CHEBI:57427"/>
        <dbReference type="ChEBI" id="CHEBI:78442"/>
        <dbReference type="ChEBI" id="CHEBI:78494"/>
        <dbReference type="ChEBI" id="CHEBI:456215"/>
        <dbReference type="EC" id="6.1.1.4"/>
    </reaction>
</comment>
<comment type="subcellular location">
    <subcellularLocation>
        <location evidence="1">Cytoplasm</location>
    </subcellularLocation>
</comment>
<comment type="similarity">
    <text evidence="1">Belongs to the class-I aminoacyl-tRNA synthetase family.</text>
</comment>
<organism>
    <name type="scientific">Bacteroides fragilis (strain YCH46)</name>
    <dbReference type="NCBI Taxonomy" id="295405"/>
    <lineage>
        <taxon>Bacteria</taxon>
        <taxon>Pseudomonadati</taxon>
        <taxon>Bacteroidota</taxon>
        <taxon>Bacteroidia</taxon>
        <taxon>Bacteroidales</taxon>
        <taxon>Bacteroidaceae</taxon>
        <taxon>Bacteroides</taxon>
    </lineage>
</organism>
<feature type="chain" id="PRO_0000151968" description="Leucine--tRNA ligase">
    <location>
        <begin position="1"/>
        <end position="943"/>
    </location>
</feature>
<feature type="short sequence motif" description="'HIGH' region">
    <location>
        <begin position="40"/>
        <end position="51"/>
    </location>
</feature>
<feature type="short sequence motif" description="'KMSKS' region">
    <location>
        <begin position="717"/>
        <end position="721"/>
    </location>
</feature>
<feature type="binding site" evidence="1">
    <location>
        <position position="720"/>
    </location>
    <ligand>
        <name>ATP</name>
        <dbReference type="ChEBI" id="CHEBI:30616"/>
    </ligand>
</feature>
<name>SYL_BACFR</name>
<accession>Q64MG4</accession>
<proteinExistence type="inferred from homology"/>
<sequence length="943" mass="107969">MEYNFREIEKKWQKIWVDNHTYQVNEDASKQKFYVLNMFPYPSGAGLHVGHPLGYIASDIYARYKRLQGFNVLNPMGYDAYGLPAEQYAIQTGQHPAITTVNNINRYREQLDKIGFSFDWNREIRTCDPEYYHWTQWAFIKMFNSYYCNDEKQARPIEELIEAFSTNGTQGMNVACGEEMDFTADEWNAKSEKEQQEILMNYRIAYLGNTMVNWCPALGTVLANDEVVDGVSERGGYPVIQKVMRQWCLRVSAYAQRLLDGLETVEWTDSLKETQRNWIGRSEGAEMNFKVKDSDIEFTIFTTRADTVFGVTFMVLAPESELVAKLTTPEQKAEVDAYLDRTKKRTERERIADRSVSGVFSGSYAINPLTNEPIPVWISDYVLAGYGTGAIMAVPAHDSRDYAFAKHFNLEIRPLIEGCDVSEESFDAKEGIMMNSPRPGAPEGGLVLNGLTVKEAIAKTKEYIKATGLGRVKVNFRLRDAIFSRQRYWGEPFPVYYKDGMPYMIDESCLPLELPEVAKFLPTETGEPPLGHATKWAWDTVNKCVTDNENIDNRTIFPLELNTMPGFAGSSAYYLRYMDPRNHEALVSPAVDQYWKNVDLYVGGTEHATGHLIYSRFWNKFLHDWGISVAEEPFQKLVNQGMIQGRSNFVYRIKDTNTFVSLNLKDQYEVTPIHVDVNIVSNDILDLEAFKAWRPEYETAEFILEDGKYICGWAVEKMSKSMFNVVNPDMIVEKYGADTLRMYEMFLGPVEQSKPWDTNGIDGVHRFIKKFWSLFYDRNGEYLVKDEPATKEELKALHKLIKKVTGDIEQFSYNTSVSAFMICVNELSSLKCNKKEVLEQLIVVLAPFAPHVCEELWDTLGNTTSVCDAQWPTFNEQYLVEDTVNYTISFNGKARFNMEFPADAASDAIQATVLADERSLKWTEGKTPKKVIVVPKKIVNIVI</sequence>
<keyword id="KW-0030">Aminoacyl-tRNA synthetase</keyword>
<keyword id="KW-0067">ATP-binding</keyword>
<keyword id="KW-0963">Cytoplasm</keyword>
<keyword id="KW-0436">Ligase</keyword>
<keyword id="KW-0547">Nucleotide-binding</keyword>
<keyword id="KW-0648">Protein biosynthesis</keyword>